<accession>B2JDV2</accession>
<gene>
    <name evidence="1" type="primary">kdsB</name>
    <name type="ordered locus">Bphy_0536</name>
</gene>
<proteinExistence type="inferred from homology"/>
<keyword id="KW-0963">Cytoplasm</keyword>
<keyword id="KW-0448">Lipopolysaccharide biosynthesis</keyword>
<keyword id="KW-0548">Nucleotidyltransferase</keyword>
<keyword id="KW-1185">Reference proteome</keyword>
<keyword id="KW-0808">Transferase</keyword>
<organism>
    <name type="scientific">Paraburkholderia phymatum (strain DSM 17167 / CIP 108236 / LMG 21445 / STM815)</name>
    <name type="common">Burkholderia phymatum</name>
    <dbReference type="NCBI Taxonomy" id="391038"/>
    <lineage>
        <taxon>Bacteria</taxon>
        <taxon>Pseudomonadati</taxon>
        <taxon>Pseudomonadota</taxon>
        <taxon>Betaproteobacteria</taxon>
        <taxon>Burkholderiales</taxon>
        <taxon>Burkholderiaceae</taxon>
        <taxon>Paraburkholderia</taxon>
    </lineage>
</organism>
<reference key="1">
    <citation type="journal article" date="2014" name="Stand. Genomic Sci.">
        <title>Complete genome sequence of Burkholderia phymatum STM815(T), a broad host range and efficient nitrogen-fixing symbiont of Mimosa species.</title>
        <authorList>
            <person name="Moulin L."/>
            <person name="Klonowska A."/>
            <person name="Caroline B."/>
            <person name="Booth K."/>
            <person name="Vriezen J.A."/>
            <person name="Melkonian R."/>
            <person name="James E.K."/>
            <person name="Young J.P."/>
            <person name="Bena G."/>
            <person name="Hauser L."/>
            <person name="Land M."/>
            <person name="Kyrpides N."/>
            <person name="Bruce D."/>
            <person name="Chain P."/>
            <person name="Copeland A."/>
            <person name="Pitluck S."/>
            <person name="Woyke T."/>
            <person name="Lizotte-Waniewski M."/>
            <person name="Bristow J."/>
            <person name="Riley M."/>
        </authorList>
    </citation>
    <scope>NUCLEOTIDE SEQUENCE [LARGE SCALE GENOMIC DNA]</scope>
    <source>
        <strain>DSM 17167 / CIP 108236 / LMG 21445 / STM815</strain>
    </source>
</reference>
<evidence type="ECO:0000255" key="1">
    <source>
        <dbReference type="HAMAP-Rule" id="MF_00057"/>
    </source>
</evidence>
<name>KDSB_PARP8</name>
<comment type="function">
    <text evidence="1">Activates KDO (a required 8-carbon sugar) for incorporation into bacterial lipopolysaccharide in Gram-negative bacteria.</text>
</comment>
<comment type="catalytic activity">
    <reaction evidence="1">
        <text>3-deoxy-alpha-D-manno-oct-2-ulosonate + CTP = CMP-3-deoxy-beta-D-manno-octulosonate + diphosphate</text>
        <dbReference type="Rhea" id="RHEA:23448"/>
        <dbReference type="ChEBI" id="CHEBI:33019"/>
        <dbReference type="ChEBI" id="CHEBI:37563"/>
        <dbReference type="ChEBI" id="CHEBI:85986"/>
        <dbReference type="ChEBI" id="CHEBI:85987"/>
        <dbReference type="EC" id="2.7.7.38"/>
    </reaction>
</comment>
<comment type="pathway">
    <text evidence="1">Nucleotide-sugar biosynthesis; CMP-3-deoxy-D-manno-octulosonate biosynthesis; CMP-3-deoxy-D-manno-octulosonate from 3-deoxy-D-manno-octulosonate and CTP: step 1/1.</text>
</comment>
<comment type="pathway">
    <text evidence="1">Bacterial outer membrane biogenesis; lipopolysaccharide biosynthesis.</text>
</comment>
<comment type="subcellular location">
    <subcellularLocation>
        <location evidence="1">Cytoplasm</location>
    </subcellularLocation>
</comment>
<comment type="similarity">
    <text evidence="1">Belongs to the KdsB family.</text>
</comment>
<sequence length="267" mass="28729">MNDTQHTPPFIAVVPARLASTRLPNKPLADIGGKPMVVRVAERAVESGAQQVLIATDAQAVFDVARAHGIDAMMTRADHPSGTDRLAEVAAHYGWRDDMIVVNVQGDEPLIDPALVRGVASHLAATDGCAIATAAHPIHDPADVFNPNVVKVVPDARGVALYFSRAPIPWARDAYQPHWPNIAQMPAPPAPAAVYRHIGLYAYRAKFLRTYPSLSISPIEQAEALEQLRAMWHGERIAVLVTNDAPLPGVDTPDDLARVQAFFGSSA</sequence>
<feature type="chain" id="PRO_0000370032" description="3-deoxy-manno-octulosonate cytidylyltransferase">
    <location>
        <begin position="1"/>
        <end position="267"/>
    </location>
</feature>
<protein>
    <recommendedName>
        <fullName evidence="1">3-deoxy-manno-octulosonate cytidylyltransferase</fullName>
        <ecNumber evidence="1">2.7.7.38</ecNumber>
    </recommendedName>
    <alternativeName>
        <fullName evidence="1">CMP-2-keto-3-deoxyoctulosonic acid synthase</fullName>
        <shortName evidence="1">CKS</shortName>
        <shortName evidence="1">CMP-KDO synthase</shortName>
    </alternativeName>
</protein>
<dbReference type="EC" id="2.7.7.38" evidence="1"/>
<dbReference type="EMBL" id="CP001043">
    <property type="protein sequence ID" value="ACC69728.1"/>
    <property type="molecule type" value="Genomic_DNA"/>
</dbReference>
<dbReference type="RefSeq" id="WP_012399953.1">
    <property type="nucleotide sequence ID" value="NC_010622.1"/>
</dbReference>
<dbReference type="SMR" id="B2JDV2"/>
<dbReference type="STRING" id="391038.Bphy_0536"/>
<dbReference type="KEGG" id="bph:Bphy_0536"/>
<dbReference type="eggNOG" id="COG1212">
    <property type="taxonomic scope" value="Bacteria"/>
</dbReference>
<dbReference type="HOGENOM" id="CLU_065038_1_0_4"/>
<dbReference type="OrthoDB" id="9815559at2"/>
<dbReference type="UniPathway" id="UPA00030"/>
<dbReference type="UniPathway" id="UPA00358">
    <property type="reaction ID" value="UER00476"/>
</dbReference>
<dbReference type="Proteomes" id="UP000001192">
    <property type="component" value="Chromosome 1"/>
</dbReference>
<dbReference type="GO" id="GO:0005829">
    <property type="term" value="C:cytosol"/>
    <property type="evidence" value="ECO:0007669"/>
    <property type="project" value="TreeGrafter"/>
</dbReference>
<dbReference type="GO" id="GO:0008690">
    <property type="term" value="F:3-deoxy-manno-octulosonate cytidylyltransferase activity"/>
    <property type="evidence" value="ECO:0007669"/>
    <property type="project" value="UniProtKB-UniRule"/>
</dbReference>
<dbReference type="GO" id="GO:0033468">
    <property type="term" value="P:CMP-keto-3-deoxy-D-manno-octulosonic acid biosynthetic process"/>
    <property type="evidence" value="ECO:0007669"/>
    <property type="project" value="UniProtKB-UniRule"/>
</dbReference>
<dbReference type="GO" id="GO:0009103">
    <property type="term" value="P:lipopolysaccharide biosynthetic process"/>
    <property type="evidence" value="ECO:0007669"/>
    <property type="project" value="UniProtKB-UniRule"/>
</dbReference>
<dbReference type="CDD" id="cd02517">
    <property type="entry name" value="CMP-KDO-Synthetase"/>
    <property type="match status" value="1"/>
</dbReference>
<dbReference type="FunFam" id="3.90.550.10:FF:000011">
    <property type="entry name" value="3-deoxy-manno-octulosonate cytidylyltransferase"/>
    <property type="match status" value="1"/>
</dbReference>
<dbReference type="Gene3D" id="3.90.550.10">
    <property type="entry name" value="Spore Coat Polysaccharide Biosynthesis Protein SpsA, Chain A"/>
    <property type="match status" value="1"/>
</dbReference>
<dbReference type="HAMAP" id="MF_00057">
    <property type="entry name" value="KdsB"/>
    <property type="match status" value="1"/>
</dbReference>
<dbReference type="InterPro" id="IPR003329">
    <property type="entry name" value="Cytidylyl_trans"/>
</dbReference>
<dbReference type="InterPro" id="IPR004528">
    <property type="entry name" value="KdsB"/>
</dbReference>
<dbReference type="InterPro" id="IPR029044">
    <property type="entry name" value="Nucleotide-diphossugar_trans"/>
</dbReference>
<dbReference type="NCBIfam" id="TIGR00466">
    <property type="entry name" value="kdsB"/>
    <property type="match status" value="1"/>
</dbReference>
<dbReference type="NCBIfam" id="NF003952">
    <property type="entry name" value="PRK05450.1-5"/>
    <property type="match status" value="1"/>
</dbReference>
<dbReference type="NCBIfam" id="NF009905">
    <property type="entry name" value="PRK13368.1"/>
    <property type="match status" value="1"/>
</dbReference>
<dbReference type="PANTHER" id="PTHR42866">
    <property type="entry name" value="3-DEOXY-MANNO-OCTULOSONATE CYTIDYLYLTRANSFERASE"/>
    <property type="match status" value="1"/>
</dbReference>
<dbReference type="PANTHER" id="PTHR42866:SF2">
    <property type="entry name" value="3-DEOXY-MANNO-OCTULOSONATE CYTIDYLYLTRANSFERASE, MITOCHONDRIAL"/>
    <property type="match status" value="1"/>
</dbReference>
<dbReference type="Pfam" id="PF02348">
    <property type="entry name" value="CTP_transf_3"/>
    <property type="match status" value="1"/>
</dbReference>
<dbReference type="SUPFAM" id="SSF53448">
    <property type="entry name" value="Nucleotide-diphospho-sugar transferases"/>
    <property type="match status" value="1"/>
</dbReference>